<protein>
    <recommendedName>
        <fullName>Snake venom serine protease</fullName>
        <shortName>SVSP</shortName>
        <ecNumber>3.4.21.-</ecNumber>
    </recommendedName>
</protein>
<reference key="1">
    <citation type="submission" date="2005-10" db="EMBL/GenBank/DDBJ databases">
        <title>Molecular cloning and sequence analysis of a thrombin-like enzyme from the venom of Lachesis stenophrys.</title>
        <authorList>
            <person name="Arce V."/>
            <person name="Azofeifa G."/>
            <person name="Flores M."/>
            <person name="Alape A."/>
        </authorList>
    </citation>
    <scope>NUCLEOTIDE SEQUENCE [MRNA]</scope>
    <source>
        <tissue>Venom gland</tissue>
    </source>
</reference>
<comment type="function">
    <text evidence="1">Snake venom serine protease that may act in the hemostasis system of the prey.</text>
</comment>
<comment type="subunit">
    <text evidence="1">Monomer.</text>
</comment>
<comment type="subcellular location">
    <subcellularLocation>
        <location evidence="1">Secreted</location>
    </subcellularLocation>
</comment>
<comment type="tissue specificity">
    <text>Expressed by the venom gland.</text>
</comment>
<comment type="similarity">
    <text evidence="3">Belongs to the peptidase S1 family. Snake venom subfamily.</text>
</comment>
<keyword id="KW-1015">Disulfide bond</keyword>
<keyword id="KW-0325">Glycoprotein</keyword>
<keyword id="KW-1199">Hemostasis impairing toxin</keyword>
<keyword id="KW-0378">Hydrolase</keyword>
<keyword id="KW-0645">Protease</keyword>
<keyword id="KW-0964">Secreted</keyword>
<keyword id="KW-0720">Serine protease</keyword>
<keyword id="KW-0732">Signal</keyword>
<keyword id="KW-0800">Toxin</keyword>
<name>VSP_LACST</name>
<sequence>MVLIRVLANLLILQLSYAQKSSELVIGGDECNINEHRSLALVYITSGFLCGGTLINQQWVLTAAHCDRGNMLIFFDVHSLKGLNKDVQSRVAKEKFICPNRKKDDEKDKDIMLIKLDSPVSNSEHIAPLSLPSNPPSVGSVCRIMGWGAITSPNVTLPGVPHCANINILDYEVCRKAYTGLPATSRTLCAGILEGGKDSCKGDSGGPLICNGQFQGIVSWGAHPCGQSLKPGVYTKVFDYTEWIQSILAGNADATCPP</sequence>
<feature type="signal peptide" evidence="2">
    <location>
        <begin position="1"/>
        <end position="18"/>
    </location>
</feature>
<feature type="propeptide" id="PRO_0000295000" evidence="1">
    <location>
        <begin position="19"/>
        <end position="24"/>
    </location>
</feature>
<feature type="chain" id="PRO_0000295001" description="Snake venom serine protease">
    <location>
        <begin position="25"/>
        <end position="258"/>
    </location>
</feature>
<feature type="domain" description="Peptidase S1" evidence="3">
    <location>
        <begin position="25"/>
        <end position="249"/>
    </location>
</feature>
<feature type="active site" description="Charge relay system" evidence="1">
    <location>
        <position position="65"/>
    </location>
</feature>
<feature type="active site" description="Charge relay system" evidence="1">
    <location>
        <position position="110"/>
    </location>
</feature>
<feature type="active site" description="Charge relay system" evidence="1">
    <location>
        <position position="204"/>
    </location>
</feature>
<feature type="glycosylation site" description="N-linked (GlcNAc...) asparagine" evidence="2">
    <location>
        <position position="154"/>
    </location>
</feature>
<feature type="disulfide bond" evidence="3">
    <location>
        <begin position="31"/>
        <end position="163"/>
    </location>
</feature>
<feature type="disulfide bond" evidence="3">
    <location>
        <begin position="50"/>
        <end position="66"/>
    </location>
</feature>
<feature type="disulfide bond" evidence="3">
    <location>
        <begin position="98"/>
        <end position="256"/>
    </location>
</feature>
<feature type="disulfide bond" evidence="3">
    <location>
        <begin position="142"/>
        <end position="210"/>
    </location>
</feature>
<feature type="disulfide bond" evidence="3">
    <location>
        <begin position="174"/>
        <end position="189"/>
    </location>
</feature>
<feature type="disulfide bond" evidence="3">
    <location>
        <begin position="200"/>
        <end position="225"/>
    </location>
</feature>
<accession>Q072L7</accession>
<evidence type="ECO:0000250" key="1"/>
<evidence type="ECO:0000255" key="2"/>
<evidence type="ECO:0000255" key="3">
    <source>
        <dbReference type="PROSITE-ProRule" id="PRU00274"/>
    </source>
</evidence>
<dbReference type="EC" id="3.4.21.-"/>
<dbReference type="EMBL" id="DQ247723">
    <property type="protein sequence ID" value="ABB76279.1"/>
    <property type="molecule type" value="mRNA"/>
</dbReference>
<dbReference type="SMR" id="Q072L7"/>
<dbReference type="MEROPS" id="S01.497"/>
<dbReference type="BRENDA" id="3.4.21.74">
    <property type="organism ID" value="16986"/>
</dbReference>
<dbReference type="GO" id="GO:0005576">
    <property type="term" value="C:extracellular region"/>
    <property type="evidence" value="ECO:0007669"/>
    <property type="project" value="UniProtKB-SubCell"/>
</dbReference>
<dbReference type="GO" id="GO:0030141">
    <property type="term" value="C:secretory granule"/>
    <property type="evidence" value="ECO:0007669"/>
    <property type="project" value="TreeGrafter"/>
</dbReference>
<dbReference type="GO" id="GO:0004252">
    <property type="term" value="F:serine-type endopeptidase activity"/>
    <property type="evidence" value="ECO:0007669"/>
    <property type="project" value="InterPro"/>
</dbReference>
<dbReference type="GO" id="GO:0090729">
    <property type="term" value="F:toxin activity"/>
    <property type="evidence" value="ECO:0007669"/>
    <property type="project" value="UniProtKB-KW"/>
</dbReference>
<dbReference type="GO" id="GO:0006508">
    <property type="term" value="P:proteolysis"/>
    <property type="evidence" value="ECO:0007669"/>
    <property type="project" value="UniProtKB-KW"/>
</dbReference>
<dbReference type="CDD" id="cd00190">
    <property type="entry name" value="Tryp_SPc"/>
    <property type="match status" value="1"/>
</dbReference>
<dbReference type="FunFam" id="2.40.10.10:FF:000158">
    <property type="entry name" value="Thrombin-like enzyme saxthrombin"/>
    <property type="match status" value="1"/>
</dbReference>
<dbReference type="Gene3D" id="2.40.10.10">
    <property type="entry name" value="Trypsin-like serine proteases"/>
    <property type="match status" value="2"/>
</dbReference>
<dbReference type="InterPro" id="IPR009003">
    <property type="entry name" value="Peptidase_S1_PA"/>
</dbReference>
<dbReference type="InterPro" id="IPR043504">
    <property type="entry name" value="Peptidase_S1_PA_chymotrypsin"/>
</dbReference>
<dbReference type="InterPro" id="IPR001314">
    <property type="entry name" value="Peptidase_S1A"/>
</dbReference>
<dbReference type="InterPro" id="IPR001254">
    <property type="entry name" value="Trypsin_dom"/>
</dbReference>
<dbReference type="InterPro" id="IPR018114">
    <property type="entry name" value="TRYPSIN_HIS"/>
</dbReference>
<dbReference type="InterPro" id="IPR033116">
    <property type="entry name" value="TRYPSIN_SER"/>
</dbReference>
<dbReference type="PANTHER" id="PTHR24271:SF47">
    <property type="entry name" value="KALLIKREIN-1"/>
    <property type="match status" value="1"/>
</dbReference>
<dbReference type="PANTHER" id="PTHR24271">
    <property type="entry name" value="KALLIKREIN-RELATED"/>
    <property type="match status" value="1"/>
</dbReference>
<dbReference type="Pfam" id="PF00089">
    <property type="entry name" value="Trypsin"/>
    <property type="match status" value="1"/>
</dbReference>
<dbReference type="PRINTS" id="PR00722">
    <property type="entry name" value="CHYMOTRYPSIN"/>
</dbReference>
<dbReference type="SMART" id="SM00020">
    <property type="entry name" value="Tryp_SPc"/>
    <property type="match status" value="1"/>
</dbReference>
<dbReference type="SUPFAM" id="SSF50494">
    <property type="entry name" value="Trypsin-like serine proteases"/>
    <property type="match status" value="1"/>
</dbReference>
<dbReference type="PROSITE" id="PS50240">
    <property type="entry name" value="TRYPSIN_DOM"/>
    <property type="match status" value="1"/>
</dbReference>
<dbReference type="PROSITE" id="PS00134">
    <property type="entry name" value="TRYPSIN_HIS"/>
    <property type="match status" value="1"/>
</dbReference>
<dbReference type="PROSITE" id="PS00135">
    <property type="entry name" value="TRYPSIN_SER"/>
    <property type="match status" value="1"/>
</dbReference>
<proteinExistence type="evidence at transcript level"/>
<organism>
    <name type="scientific">Lachesis stenophrys</name>
    <name type="common">Central American bushmaster</name>
    <dbReference type="NCBI Taxonomy" id="88085"/>
    <lineage>
        <taxon>Eukaryota</taxon>
        <taxon>Metazoa</taxon>
        <taxon>Chordata</taxon>
        <taxon>Craniata</taxon>
        <taxon>Vertebrata</taxon>
        <taxon>Euteleostomi</taxon>
        <taxon>Lepidosauria</taxon>
        <taxon>Squamata</taxon>
        <taxon>Bifurcata</taxon>
        <taxon>Unidentata</taxon>
        <taxon>Episquamata</taxon>
        <taxon>Toxicofera</taxon>
        <taxon>Serpentes</taxon>
        <taxon>Colubroidea</taxon>
        <taxon>Viperidae</taxon>
        <taxon>Crotalinae</taxon>
        <taxon>Lachesis</taxon>
    </lineage>
</organism>